<reference key="1">
    <citation type="journal article" date="2008" name="J. Bacteriol.">
        <title>The genome of Heliobacterium modesticaldum, a phototrophic representative of the Firmicutes containing the simplest photosynthetic apparatus.</title>
        <authorList>
            <person name="Sattley W.M."/>
            <person name="Madigan M.T."/>
            <person name="Swingley W.D."/>
            <person name="Cheung P.C."/>
            <person name="Clocksin K.M."/>
            <person name="Conrad A.L."/>
            <person name="Dejesa L.C."/>
            <person name="Honchak B.M."/>
            <person name="Jung D.O."/>
            <person name="Karbach L.E."/>
            <person name="Kurdoglu A."/>
            <person name="Lahiri S."/>
            <person name="Mastrian S.D."/>
            <person name="Page L.E."/>
            <person name="Taylor H.L."/>
            <person name="Wang Z.T."/>
            <person name="Raymond J."/>
            <person name="Chen M."/>
            <person name="Blankenship R.E."/>
            <person name="Touchman J.W."/>
        </authorList>
    </citation>
    <scope>NUCLEOTIDE SEQUENCE [LARGE SCALE GENOMIC DNA]</scope>
    <source>
        <strain>ATCC 51547 / Ice1</strain>
    </source>
</reference>
<accession>B0TA81</accession>
<sequence length="152" mass="15601">MRGGTVLLILILLLGVIARSPMTALAAASILALSYLGWGGLLEWIEQNGVDTGLIMLTLAMLAPFATGKVGLREVLLSFASLPGIIAVIGGVLATNLNKRGIDLLSGEPQIIVGMIVGSLLGIVLFGGIPVGPLMAGGLTALILQIYGWLSK</sequence>
<dbReference type="EMBL" id="CP000930">
    <property type="protein sequence ID" value="ABZ83618.1"/>
    <property type="molecule type" value="Genomic_DNA"/>
</dbReference>
<dbReference type="RefSeq" id="WP_012282146.1">
    <property type="nucleotide sequence ID" value="NC_010337.2"/>
</dbReference>
<dbReference type="STRING" id="498761.HM1_0948"/>
<dbReference type="KEGG" id="hmo:HM1_0948"/>
<dbReference type="eggNOG" id="COG2707">
    <property type="taxonomic scope" value="Bacteria"/>
</dbReference>
<dbReference type="HOGENOM" id="CLU_125889_1_0_9"/>
<dbReference type="OrthoDB" id="80306at2"/>
<dbReference type="Proteomes" id="UP000008550">
    <property type="component" value="Chromosome"/>
</dbReference>
<dbReference type="GO" id="GO:0005886">
    <property type="term" value="C:plasma membrane"/>
    <property type="evidence" value="ECO:0007669"/>
    <property type="project" value="UniProtKB-SubCell"/>
</dbReference>
<dbReference type="HAMAP" id="MF_01874">
    <property type="entry name" value="UPF0756"/>
    <property type="match status" value="1"/>
</dbReference>
<dbReference type="InterPro" id="IPR007382">
    <property type="entry name" value="UPF0756_TM"/>
</dbReference>
<dbReference type="PANTHER" id="PTHR38452">
    <property type="entry name" value="UPF0756 MEMBRANE PROTEIN YEAL"/>
    <property type="match status" value="1"/>
</dbReference>
<dbReference type="PANTHER" id="PTHR38452:SF1">
    <property type="entry name" value="UPF0756 MEMBRANE PROTEIN YEAL"/>
    <property type="match status" value="1"/>
</dbReference>
<dbReference type="Pfam" id="PF04284">
    <property type="entry name" value="DUF441"/>
    <property type="match status" value="1"/>
</dbReference>
<feature type="chain" id="PRO_0000388888" description="UPF0756 membrane protein Helmi_09930">
    <location>
        <begin position="1"/>
        <end position="152"/>
    </location>
</feature>
<feature type="transmembrane region" description="Helical" evidence="1">
    <location>
        <begin position="6"/>
        <end position="26"/>
    </location>
</feature>
<feature type="transmembrane region" description="Helical" evidence="1">
    <location>
        <begin position="52"/>
        <end position="72"/>
    </location>
</feature>
<feature type="transmembrane region" description="Helical" evidence="1">
    <location>
        <begin position="75"/>
        <end position="95"/>
    </location>
</feature>
<feature type="transmembrane region" description="Helical" evidence="1">
    <location>
        <begin position="111"/>
        <end position="131"/>
    </location>
</feature>
<feature type="transmembrane region" description="Helical" evidence="1">
    <location>
        <begin position="132"/>
        <end position="152"/>
    </location>
</feature>
<keyword id="KW-1003">Cell membrane</keyword>
<keyword id="KW-0472">Membrane</keyword>
<keyword id="KW-1185">Reference proteome</keyword>
<keyword id="KW-0812">Transmembrane</keyword>
<keyword id="KW-1133">Transmembrane helix</keyword>
<protein>
    <recommendedName>
        <fullName evidence="1">UPF0756 membrane protein Helmi_09930</fullName>
    </recommendedName>
</protein>
<comment type="subcellular location">
    <subcellularLocation>
        <location evidence="1">Cell membrane</location>
        <topology evidence="1">Multi-pass membrane protein</topology>
    </subcellularLocation>
</comment>
<comment type="similarity">
    <text evidence="1">Belongs to the UPF0756 family.</text>
</comment>
<gene>
    <name type="ordered locus">Helmi_09930</name>
    <name type="ORF">HM1_0948</name>
</gene>
<evidence type="ECO:0000255" key="1">
    <source>
        <dbReference type="HAMAP-Rule" id="MF_01874"/>
    </source>
</evidence>
<proteinExistence type="inferred from homology"/>
<organism>
    <name type="scientific">Heliobacterium modesticaldum (strain ATCC 51547 / Ice1)</name>
    <dbReference type="NCBI Taxonomy" id="498761"/>
    <lineage>
        <taxon>Bacteria</taxon>
        <taxon>Bacillati</taxon>
        <taxon>Bacillota</taxon>
        <taxon>Clostridia</taxon>
        <taxon>Eubacteriales</taxon>
        <taxon>Heliobacteriaceae</taxon>
        <taxon>Heliomicrobium</taxon>
    </lineage>
</organism>
<name>Y993_HELMI</name>